<evidence type="ECO:0000250" key="1"/>
<evidence type="ECO:0000305" key="2"/>
<name>RS22_KLUMA</name>
<protein>
    <recommendedName>
        <fullName evidence="2">Small ribosomal subunit protein uS8</fullName>
    </recommendedName>
    <alternativeName>
        <fullName>40S ribosomal protein S22</fullName>
    </alternativeName>
    <alternativeName>
        <fullName>Ribosomal protein S15a</fullName>
    </alternativeName>
</protein>
<comment type="similarity">
    <text evidence="2">Belongs to the universal ribosomal protein uS8 family.</text>
</comment>
<gene>
    <name type="primary">RPS22</name>
</gene>
<proteinExistence type="inferred from homology"/>
<sequence length="130" mass="14637">MTRTSVLADALNAINNAEKTGKRQVLIRPSSKVIIKFLQVMQKHGYIGEFEYIDDHRSGKIVVQLNGRLNKCGVISPRFNVKISDVEKWTANLLPARQFGYVILTTSAGIMDHEEAHRKHVSGKILGFVY</sequence>
<organism>
    <name type="scientific">Kluyveromyces marxianus</name>
    <name type="common">Yeast</name>
    <name type="synonym">Candida kefyr</name>
    <dbReference type="NCBI Taxonomy" id="4911"/>
    <lineage>
        <taxon>Eukaryota</taxon>
        <taxon>Fungi</taxon>
        <taxon>Dikarya</taxon>
        <taxon>Ascomycota</taxon>
        <taxon>Saccharomycotina</taxon>
        <taxon>Saccharomycetes</taxon>
        <taxon>Saccharomycetales</taxon>
        <taxon>Saccharomycetaceae</taxon>
        <taxon>Kluyveromyces</taxon>
    </lineage>
</organism>
<reference key="1">
    <citation type="journal article" date="1992" name="Yeast">
        <title>Structural and putative regulatory sequences of Kluyveromyces ribosomal protein genes.</title>
        <authorList>
            <person name="Bergkamp-Steffens G.K."/>
            <person name="Hoekstra R."/>
            <person name="Planta R.J."/>
        </authorList>
    </citation>
    <scope>NUCLEOTIDE SEQUENCE [GENOMIC DNA]</scope>
</reference>
<feature type="initiator methionine" description="Removed" evidence="1">
    <location>
        <position position="1"/>
    </location>
</feature>
<feature type="chain" id="PRO_0000126620" description="Small ribosomal subunit protein uS8">
    <location>
        <begin position="2"/>
        <end position="130"/>
    </location>
</feature>
<dbReference type="EMBL" id="AH004149">
    <property type="protein sequence ID" value="AAB24900.1"/>
    <property type="molecule type" value="Genomic_DNA"/>
</dbReference>
<dbReference type="PIR" id="S30003">
    <property type="entry name" value="S30003"/>
</dbReference>
<dbReference type="SMR" id="P33953"/>
<dbReference type="VEuPathDB" id="FungiDB:KLMA_50262"/>
<dbReference type="OrthoDB" id="12884at4893"/>
<dbReference type="GO" id="GO:1990904">
    <property type="term" value="C:ribonucleoprotein complex"/>
    <property type="evidence" value="ECO:0007669"/>
    <property type="project" value="UniProtKB-KW"/>
</dbReference>
<dbReference type="GO" id="GO:0005840">
    <property type="term" value="C:ribosome"/>
    <property type="evidence" value="ECO:0007669"/>
    <property type="project" value="UniProtKB-KW"/>
</dbReference>
<dbReference type="GO" id="GO:0003735">
    <property type="term" value="F:structural constituent of ribosome"/>
    <property type="evidence" value="ECO:0007669"/>
    <property type="project" value="InterPro"/>
</dbReference>
<dbReference type="GO" id="GO:0006412">
    <property type="term" value="P:translation"/>
    <property type="evidence" value="ECO:0007669"/>
    <property type="project" value="InterPro"/>
</dbReference>
<dbReference type="FunFam" id="3.30.1370.30:FF:000001">
    <property type="entry name" value="40S ribosomal protein S15a"/>
    <property type="match status" value="1"/>
</dbReference>
<dbReference type="FunFam" id="3.30.1490.10:FF:000002">
    <property type="entry name" value="40S ribosomal protein S15a"/>
    <property type="match status" value="1"/>
</dbReference>
<dbReference type="Gene3D" id="3.30.1370.30">
    <property type="match status" value="1"/>
</dbReference>
<dbReference type="Gene3D" id="3.30.1490.10">
    <property type="match status" value="1"/>
</dbReference>
<dbReference type="HAMAP" id="MF_01302_A">
    <property type="entry name" value="Ribosomal_uS8_A"/>
    <property type="match status" value="1"/>
</dbReference>
<dbReference type="InterPro" id="IPR000630">
    <property type="entry name" value="Ribosomal_uS8"/>
</dbReference>
<dbReference type="InterPro" id="IPR047863">
    <property type="entry name" value="Ribosomal_uS8_CS"/>
</dbReference>
<dbReference type="InterPro" id="IPR035987">
    <property type="entry name" value="Ribosomal_uS8_sf"/>
</dbReference>
<dbReference type="NCBIfam" id="NF003115">
    <property type="entry name" value="PRK04034.1"/>
    <property type="match status" value="1"/>
</dbReference>
<dbReference type="PANTHER" id="PTHR11758">
    <property type="entry name" value="40S RIBOSOMAL PROTEIN S15A"/>
    <property type="match status" value="1"/>
</dbReference>
<dbReference type="Pfam" id="PF00410">
    <property type="entry name" value="Ribosomal_S8"/>
    <property type="match status" value="1"/>
</dbReference>
<dbReference type="SUPFAM" id="SSF56047">
    <property type="entry name" value="Ribosomal protein S8"/>
    <property type="match status" value="1"/>
</dbReference>
<dbReference type="PROSITE" id="PS00053">
    <property type="entry name" value="RIBOSOMAL_S8"/>
    <property type="match status" value="1"/>
</dbReference>
<accession>P33953</accession>
<keyword id="KW-0687">Ribonucleoprotein</keyword>
<keyword id="KW-0689">Ribosomal protein</keyword>